<feature type="chain" id="PRO_1000088043" description="Pyridoxal 5'-phosphate synthase subunit PdxT">
    <location>
        <begin position="1"/>
        <end position="196"/>
    </location>
</feature>
<feature type="active site" description="Nucleophile" evidence="1">
    <location>
        <position position="79"/>
    </location>
</feature>
<feature type="active site" description="Charge relay system" evidence="1">
    <location>
        <position position="170"/>
    </location>
</feature>
<feature type="active site" description="Charge relay system" evidence="1">
    <location>
        <position position="172"/>
    </location>
</feature>
<feature type="binding site" evidence="1">
    <location>
        <begin position="47"/>
        <end position="49"/>
    </location>
    <ligand>
        <name>L-glutamine</name>
        <dbReference type="ChEBI" id="CHEBI:58359"/>
    </ligand>
</feature>
<feature type="binding site" evidence="1">
    <location>
        <position position="106"/>
    </location>
    <ligand>
        <name>L-glutamine</name>
        <dbReference type="ChEBI" id="CHEBI:58359"/>
    </ligand>
</feature>
<feature type="binding site" evidence="1">
    <location>
        <begin position="134"/>
        <end position="135"/>
    </location>
    <ligand>
        <name>L-glutamine</name>
        <dbReference type="ChEBI" id="CHEBI:58359"/>
    </ligand>
</feature>
<accession>A7GJS9</accession>
<proteinExistence type="inferred from homology"/>
<sequence length="196" mass="21693">MVKIGVLGLQGAVREHVKAIEASGAEAVVVKQVEQLQEIDGLILPGGESTTMRRLIDKYHFMEPLREFARSRKPMFGTCAGMILLANKLIGYEEAHIGAMDITVERNAFGRQKDSFEATLSIKGVGEDFTGVFIRAPYVVDIADDVEVLSMHNGRMVAVKQGPFLAASFHPELTDDYRVTAYFVEMVEEAKMKKVV</sequence>
<organism>
    <name type="scientific">Bacillus cytotoxicus (strain DSM 22905 / CIP 110041 / 391-98 / NVH 391-98)</name>
    <dbReference type="NCBI Taxonomy" id="315749"/>
    <lineage>
        <taxon>Bacteria</taxon>
        <taxon>Bacillati</taxon>
        <taxon>Bacillota</taxon>
        <taxon>Bacilli</taxon>
        <taxon>Bacillales</taxon>
        <taxon>Bacillaceae</taxon>
        <taxon>Bacillus</taxon>
        <taxon>Bacillus cereus group</taxon>
    </lineage>
</organism>
<gene>
    <name evidence="1" type="primary">pdxT</name>
    <name type="ordered locus">Bcer98_0011</name>
</gene>
<dbReference type="EC" id="4.3.3.6" evidence="1"/>
<dbReference type="EC" id="3.5.1.2" evidence="1"/>
<dbReference type="EMBL" id="CP000764">
    <property type="protein sequence ID" value="ABS20387.1"/>
    <property type="molecule type" value="Genomic_DNA"/>
</dbReference>
<dbReference type="RefSeq" id="WP_011983158.1">
    <property type="nucleotide sequence ID" value="NC_009674.1"/>
</dbReference>
<dbReference type="SMR" id="A7GJS9"/>
<dbReference type="STRING" id="315749.Bcer98_0011"/>
<dbReference type="MEROPS" id="C26.A32"/>
<dbReference type="GeneID" id="33895309"/>
<dbReference type="KEGG" id="bcy:Bcer98_0011"/>
<dbReference type="eggNOG" id="COG0311">
    <property type="taxonomic scope" value="Bacteria"/>
</dbReference>
<dbReference type="HOGENOM" id="CLU_069674_2_0_9"/>
<dbReference type="OrthoDB" id="9810320at2"/>
<dbReference type="UniPathway" id="UPA00245"/>
<dbReference type="Proteomes" id="UP000002300">
    <property type="component" value="Chromosome"/>
</dbReference>
<dbReference type="GO" id="GO:0005829">
    <property type="term" value="C:cytosol"/>
    <property type="evidence" value="ECO:0007669"/>
    <property type="project" value="TreeGrafter"/>
</dbReference>
<dbReference type="GO" id="GO:1903600">
    <property type="term" value="C:glutaminase complex"/>
    <property type="evidence" value="ECO:0007669"/>
    <property type="project" value="TreeGrafter"/>
</dbReference>
<dbReference type="GO" id="GO:0004359">
    <property type="term" value="F:glutaminase activity"/>
    <property type="evidence" value="ECO:0007669"/>
    <property type="project" value="UniProtKB-UniRule"/>
</dbReference>
<dbReference type="GO" id="GO:0036381">
    <property type="term" value="F:pyridoxal 5'-phosphate synthase (glutamine hydrolysing) activity"/>
    <property type="evidence" value="ECO:0007669"/>
    <property type="project" value="UniProtKB-UniRule"/>
</dbReference>
<dbReference type="GO" id="GO:0006543">
    <property type="term" value="P:glutamine catabolic process"/>
    <property type="evidence" value="ECO:0007669"/>
    <property type="project" value="UniProtKB-UniRule"/>
</dbReference>
<dbReference type="GO" id="GO:0042823">
    <property type="term" value="P:pyridoxal phosphate biosynthetic process"/>
    <property type="evidence" value="ECO:0007669"/>
    <property type="project" value="UniProtKB-UniRule"/>
</dbReference>
<dbReference type="GO" id="GO:0008614">
    <property type="term" value="P:pyridoxine metabolic process"/>
    <property type="evidence" value="ECO:0007669"/>
    <property type="project" value="TreeGrafter"/>
</dbReference>
<dbReference type="CDD" id="cd01749">
    <property type="entry name" value="GATase1_PB"/>
    <property type="match status" value="1"/>
</dbReference>
<dbReference type="FunFam" id="3.40.50.880:FF:000010">
    <property type="entry name" value="uncharacterized protein LOC100176842 isoform X2"/>
    <property type="match status" value="1"/>
</dbReference>
<dbReference type="Gene3D" id="3.40.50.880">
    <property type="match status" value="1"/>
</dbReference>
<dbReference type="HAMAP" id="MF_01615">
    <property type="entry name" value="PdxT"/>
    <property type="match status" value="1"/>
</dbReference>
<dbReference type="InterPro" id="IPR029062">
    <property type="entry name" value="Class_I_gatase-like"/>
</dbReference>
<dbReference type="InterPro" id="IPR002161">
    <property type="entry name" value="PdxT/SNO"/>
</dbReference>
<dbReference type="InterPro" id="IPR021196">
    <property type="entry name" value="PdxT/SNO_CS"/>
</dbReference>
<dbReference type="NCBIfam" id="TIGR03800">
    <property type="entry name" value="PLP_synth_Pdx2"/>
    <property type="match status" value="1"/>
</dbReference>
<dbReference type="PANTHER" id="PTHR31559">
    <property type="entry name" value="PYRIDOXAL 5'-PHOSPHATE SYNTHASE SUBUNIT SNO"/>
    <property type="match status" value="1"/>
</dbReference>
<dbReference type="PANTHER" id="PTHR31559:SF0">
    <property type="entry name" value="PYRIDOXAL 5'-PHOSPHATE SYNTHASE SUBUNIT SNO1-RELATED"/>
    <property type="match status" value="1"/>
</dbReference>
<dbReference type="Pfam" id="PF01174">
    <property type="entry name" value="SNO"/>
    <property type="match status" value="1"/>
</dbReference>
<dbReference type="PIRSF" id="PIRSF005639">
    <property type="entry name" value="Glut_amidoT_SNO"/>
    <property type="match status" value="1"/>
</dbReference>
<dbReference type="SUPFAM" id="SSF52317">
    <property type="entry name" value="Class I glutamine amidotransferase-like"/>
    <property type="match status" value="1"/>
</dbReference>
<dbReference type="PROSITE" id="PS01236">
    <property type="entry name" value="PDXT_SNO_1"/>
    <property type="match status" value="1"/>
</dbReference>
<dbReference type="PROSITE" id="PS51130">
    <property type="entry name" value="PDXT_SNO_2"/>
    <property type="match status" value="1"/>
</dbReference>
<name>PDXT_BACCN</name>
<protein>
    <recommendedName>
        <fullName evidence="1">Pyridoxal 5'-phosphate synthase subunit PdxT</fullName>
        <ecNumber evidence="1">4.3.3.6</ecNumber>
    </recommendedName>
    <alternativeName>
        <fullName evidence="1">Pdx2</fullName>
    </alternativeName>
    <alternativeName>
        <fullName evidence="1">Pyridoxal 5'-phosphate synthase glutaminase subunit</fullName>
        <ecNumber evidence="1">3.5.1.2</ecNumber>
    </alternativeName>
</protein>
<keyword id="KW-0315">Glutamine amidotransferase</keyword>
<keyword id="KW-0378">Hydrolase</keyword>
<keyword id="KW-0456">Lyase</keyword>
<keyword id="KW-0663">Pyridoxal phosphate</keyword>
<reference key="1">
    <citation type="journal article" date="2008" name="Chem. Biol. Interact.">
        <title>Extending the Bacillus cereus group genomics to putative food-borne pathogens of different toxicity.</title>
        <authorList>
            <person name="Lapidus A."/>
            <person name="Goltsman E."/>
            <person name="Auger S."/>
            <person name="Galleron N."/>
            <person name="Segurens B."/>
            <person name="Dossat C."/>
            <person name="Land M.L."/>
            <person name="Broussolle V."/>
            <person name="Brillard J."/>
            <person name="Guinebretiere M.-H."/>
            <person name="Sanchis V."/>
            <person name="Nguen-the C."/>
            <person name="Lereclus D."/>
            <person name="Richardson P."/>
            <person name="Wincker P."/>
            <person name="Weissenbach J."/>
            <person name="Ehrlich S.D."/>
            <person name="Sorokin A."/>
        </authorList>
    </citation>
    <scope>NUCLEOTIDE SEQUENCE [LARGE SCALE GENOMIC DNA]</scope>
    <source>
        <strain>DSM 22905 / CIP 110041 / 391-98 / NVH 391-98</strain>
    </source>
</reference>
<comment type="function">
    <text evidence="1">Catalyzes the hydrolysis of glutamine to glutamate and ammonia as part of the biosynthesis of pyridoxal 5'-phosphate. The resulting ammonia molecule is channeled to the active site of PdxS.</text>
</comment>
<comment type="catalytic activity">
    <reaction evidence="1">
        <text>aldehydo-D-ribose 5-phosphate + D-glyceraldehyde 3-phosphate + L-glutamine = pyridoxal 5'-phosphate + L-glutamate + phosphate + 3 H2O + H(+)</text>
        <dbReference type="Rhea" id="RHEA:31507"/>
        <dbReference type="ChEBI" id="CHEBI:15377"/>
        <dbReference type="ChEBI" id="CHEBI:15378"/>
        <dbReference type="ChEBI" id="CHEBI:29985"/>
        <dbReference type="ChEBI" id="CHEBI:43474"/>
        <dbReference type="ChEBI" id="CHEBI:58273"/>
        <dbReference type="ChEBI" id="CHEBI:58359"/>
        <dbReference type="ChEBI" id="CHEBI:59776"/>
        <dbReference type="ChEBI" id="CHEBI:597326"/>
        <dbReference type="EC" id="4.3.3.6"/>
    </reaction>
</comment>
<comment type="catalytic activity">
    <reaction evidence="1">
        <text>L-glutamine + H2O = L-glutamate + NH4(+)</text>
        <dbReference type="Rhea" id="RHEA:15889"/>
        <dbReference type="ChEBI" id="CHEBI:15377"/>
        <dbReference type="ChEBI" id="CHEBI:28938"/>
        <dbReference type="ChEBI" id="CHEBI:29985"/>
        <dbReference type="ChEBI" id="CHEBI:58359"/>
        <dbReference type="EC" id="3.5.1.2"/>
    </reaction>
</comment>
<comment type="pathway">
    <text evidence="1">Cofactor biosynthesis; pyridoxal 5'-phosphate biosynthesis.</text>
</comment>
<comment type="subunit">
    <text evidence="1">In the presence of PdxS, forms a dodecamer of heterodimers. Only shows activity in the heterodimer.</text>
</comment>
<comment type="similarity">
    <text evidence="1">Belongs to the glutaminase PdxT/SNO family.</text>
</comment>
<evidence type="ECO:0000255" key="1">
    <source>
        <dbReference type="HAMAP-Rule" id="MF_01615"/>
    </source>
</evidence>